<reference key="1">
    <citation type="online journal article" date="1998" name="Plant Gene Register">
        <title>Molecular cloning of the psaL gene for photosystem I subunit XI from the thermophilic cyanobacterium Mastigocladus laminosus.</title>
        <authorList>
            <person name="He Z.-Y."/>
            <person name="Chitnis P.R."/>
            <person name="Nechushtai R."/>
        </authorList>
        <locator>PGR98-025</locator>
    </citation>
    <scope>NUCLEOTIDE SEQUENCE [GENOMIC DNA]</scope>
    <source>
        <strain>PCC 7605</strain>
    </source>
</reference>
<proteinExistence type="inferred from homology"/>
<dbReference type="EMBL" id="AF030003">
    <property type="protein sequence ID" value="AAC04841.1"/>
    <property type="molecule type" value="Genomic_DNA"/>
</dbReference>
<dbReference type="SMR" id="O31126"/>
<dbReference type="GO" id="GO:0009538">
    <property type="term" value="C:photosystem I reaction center"/>
    <property type="evidence" value="ECO:0007669"/>
    <property type="project" value="InterPro"/>
</dbReference>
<dbReference type="GO" id="GO:0031676">
    <property type="term" value="C:plasma membrane-derived thylakoid membrane"/>
    <property type="evidence" value="ECO:0007669"/>
    <property type="project" value="UniProtKB-SubCell"/>
</dbReference>
<dbReference type="GO" id="GO:0015979">
    <property type="term" value="P:photosynthesis"/>
    <property type="evidence" value="ECO:0007669"/>
    <property type="project" value="UniProtKB-UniRule"/>
</dbReference>
<dbReference type="Gene3D" id="1.20.1240.10">
    <property type="entry name" value="Photosystem I PsaL, reaction centre subunit XI"/>
    <property type="match status" value="1"/>
</dbReference>
<dbReference type="HAMAP" id="MF_00447">
    <property type="entry name" value="PSI_PsaL"/>
    <property type="match status" value="1"/>
</dbReference>
<dbReference type="InterPro" id="IPR003757">
    <property type="entry name" value="PSI_PsaL"/>
</dbReference>
<dbReference type="InterPro" id="IPR036592">
    <property type="entry name" value="PSI_PsaL_sf"/>
</dbReference>
<dbReference type="InterPro" id="IPR022980">
    <property type="entry name" value="PSI_suXI"/>
</dbReference>
<dbReference type="NCBIfam" id="NF001927">
    <property type="entry name" value="PRK00704.1-4"/>
    <property type="match status" value="1"/>
</dbReference>
<dbReference type="PANTHER" id="PTHR34803">
    <property type="entry name" value="PHOTOSYSTEM I REACTION CENTER SUBUNIT XI, CHLOROPLASTIC"/>
    <property type="match status" value="1"/>
</dbReference>
<dbReference type="PANTHER" id="PTHR34803:SF2">
    <property type="entry name" value="PHOTOSYSTEM I REACTION CENTER SUBUNIT XI, CHLOROPLASTIC"/>
    <property type="match status" value="1"/>
</dbReference>
<dbReference type="Pfam" id="PF02605">
    <property type="entry name" value="PsaL"/>
    <property type="match status" value="1"/>
</dbReference>
<dbReference type="SUPFAM" id="SSF81568">
    <property type="entry name" value="Photosystem I reaction center subunit XI, PsaL"/>
    <property type="match status" value="1"/>
</dbReference>
<gene>
    <name type="primary">psaL</name>
</gene>
<keyword id="KW-0472">Membrane</keyword>
<keyword id="KW-0602">Photosynthesis</keyword>
<keyword id="KW-0603">Photosystem I</keyword>
<keyword id="KW-0793">Thylakoid</keyword>
<keyword id="KW-0812">Transmembrane</keyword>
<keyword id="KW-1133">Transmembrane helix</keyword>
<sequence>MAQAIDASKNSPSDPRNREVVFPAYRDPQIGDLETPINSSPLVKWFIGNLPAYRPGITTFRRGLEVGMAHGYWIFGPFAKLGPLRNTVNANLAGLLSALGLIIILTGALTLYANSKPPKPVKSVATPNPPEAFQSSEGWNNFASAFLIGGIGGAVVAYFLTSNLELIQSLFGG</sequence>
<evidence type="ECO:0000250" key="1"/>
<evidence type="ECO:0000255" key="2"/>
<evidence type="ECO:0000305" key="3"/>
<comment type="subcellular location">
    <subcellularLocation>
        <location evidence="1">Cellular thylakoid membrane</location>
        <topology evidence="1">Multi-pass membrane protein</topology>
    </subcellularLocation>
</comment>
<comment type="similarity">
    <text evidence="3">Belongs to the PsaL family.</text>
</comment>
<organism>
    <name type="scientific">Mastigocladus laminosus</name>
    <name type="common">Fischerella sp.</name>
    <dbReference type="NCBI Taxonomy" id="83541"/>
    <lineage>
        <taxon>Bacteria</taxon>
        <taxon>Bacillati</taxon>
        <taxon>Cyanobacteriota</taxon>
        <taxon>Cyanophyceae</taxon>
        <taxon>Nostocales</taxon>
        <taxon>Hapalosiphonaceae</taxon>
        <taxon>Mastigocladus</taxon>
    </lineage>
</organism>
<protein>
    <recommendedName>
        <fullName>Photosystem I reaction center subunit XI</fullName>
    </recommendedName>
    <alternativeName>
        <fullName>PSI subunit V</fullName>
    </alternativeName>
    <alternativeName>
        <fullName>PSI-L</fullName>
    </alternativeName>
</protein>
<name>PSAL_MASLA</name>
<feature type="chain" id="PRO_0000194696" description="Photosystem I reaction center subunit XI">
    <location>
        <begin position="1"/>
        <end position="173"/>
    </location>
</feature>
<feature type="transmembrane region" description="Helical" evidence="2">
    <location>
        <begin position="92"/>
        <end position="112"/>
    </location>
</feature>
<feature type="transmembrane region" description="Helical" evidence="2">
    <location>
        <begin position="142"/>
        <end position="162"/>
    </location>
</feature>
<accession>O31126</accession>